<comment type="sequence caution" evidence="1">
    <conflict type="erroneous gene model prediction">
        <sequence resource="EMBL-CDS" id="EAA27579"/>
    </conflict>
    <text>The predicted gene NCU03536 has been split into 2 genes: NCU21521 and NCU21522.</text>
</comment>
<proteinExistence type="predicted"/>
<sequence>MAGSRINFTNYLRNLNVQEPQVEEYVAPNDEELALFTNTNFFDYETGQNTDYQAPPVKPDAVVAPTPVETAATSPEVPTDAFMTEFLSGLDQGLEFAAPAG</sequence>
<evidence type="ECO:0000305" key="1"/>
<dbReference type="EMBL" id="AL390092">
    <property type="protein sequence ID" value="CAD11332.1"/>
    <property type="molecule type" value="Genomic_DNA"/>
</dbReference>
<dbReference type="EMBL" id="CM002237">
    <property type="protein sequence ID" value="EAA27579.2"/>
    <property type="status" value="ALT_SEQ"/>
    <property type="molecule type" value="Genomic_DNA"/>
</dbReference>
<dbReference type="PIR" id="T51072">
    <property type="entry name" value="T51072"/>
</dbReference>
<dbReference type="STRING" id="367110.Q96U48"/>
<dbReference type="EnsemblFungi" id="EAA27579">
    <property type="protein sequence ID" value="EAA27579"/>
    <property type="gene ID" value="NCU03536"/>
</dbReference>
<dbReference type="KEGG" id="ncr:NCU03536"/>
<dbReference type="HOGENOM" id="CLU_056562_0_0_1"/>
<dbReference type="InParanoid" id="Q96U48"/>
<dbReference type="OrthoDB" id="1939598at2759"/>
<dbReference type="Proteomes" id="UP000001805">
    <property type="component" value="Chromosome 6, Linkage Group II"/>
</dbReference>
<reference key="1">
    <citation type="journal article" date="2003" name="Nucleic Acids Res.">
        <title>What's in the genome of a filamentous fungus? Analysis of the Neurospora genome sequence.</title>
        <authorList>
            <person name="Mannhaupt G."/>
            <person name="Montrone C."/>
            <person name="Haase D."/>
            <person name="Mewes H.-W."/>
            <person name="Aign V."/>
            <person name="Hoheisel J.D."/>
            <person name="Fartmann B."/>
            <person name="Nyakatura G."/>
            <person name="Kempken F."/>
            <person name="Maier J."/>
            <person name="Schulte U."/>
        </authorList>
    </citation>
    <scope>NUCLEOTIDE SEQUENCE [LARGE SCALE GENOMIC DNA]</scope>
    <source>
        <strain>ATCC 24698 / 74-OR23-1A / CBS 708.71 / DSM 1257 / FGSC 987</strain>
    </source>
</reference>
<reference key="2">
    <citation type="journal article" date="2003" name="Nature">
        <title>The genome sequence of the filamentous fungus Neurospora crassa.</title>
        <authorList>
            <person name="Galagan J.E."/>
            <person name="Calvo S.E."/>
            <person name="Borkovich K.A."/>
            <person name="Selker E.U."/>
            <person name="Read N.D."/>
            <person name="Jaffe D.B."/>
            <person name="FitzHugh W."/>
            <person name="Ma L.-J."/>
            <person name="Smirnov S."/>
            <person name="Purcell S."/>
            <person name="Rehman B."/>
            <person name="Elkins T."/>
            <person name="Engels R."/>
            <person name="Wang S."/>
            <person name="Nielsen C.B."/>
            <person name="Butler J."/>
            <person name="Endrizzi M."/>
            <person name="Qui D."/>
            <person name="Ianakiev P."/>
            <person name="Bell-Pedersen D."/>
            <person name="Nelson M.A."/>
            <person name="Werner-Washburne M."/>
            <person name="Selitrennikoff C.P."/>
            <person name="Kinsey J.A."/>
            <person name="Braun E.L."/>
            <person name="Zelter A."/>
            <person name="Schulte U."/>
            <person name="Kothe G.O."/>
            <person name="Jedd G."/>
            <person name="Mewes H.-W."/>
            <person name="Staben C."/>
            <person name="Marcotte E."/>
            <person name="Greenberg D."/>
            <person name="Roy A."/>
            <person name="Foley K."/>
            <person name="Naylor J."/>
            <person name="Stange-Thomann N."/>
            <person name="Barrett R."/>
            <person name="Gnerre S."/>
            <person name="Kamal M."/>
            <person name="Kamvysselis M."/>
            <person name="Mauceli E.W."/>
            <person name="Bielke C."/>
            <person name="Rudd S."/>
            <person name="Frishman D."/>
            <person name="Krystofova S."/>
            <person name="Rasmussen C."/>
            <person name="Metzenberg R.L."/>
            <person name="Perkins D.D."/>
            <person name="Kroken S."/>
            <person name="Cogoni C."/>
            <person name="Macino G."/>
            <person name="Catcheside D.E.A."/>
            <person name="Li W."/>
            <person name="Pratt R.J."/>
            <person name="Osmani S.A."/>
            <person name="DeSouza C.P.C."/>
            <person name="Glass N.L."/>
            <person name="Orbach M.J."/>
            <person name="Berglund J.A."/>
            <person name="Voelker R."/>
            <person name="Yarden O."/>
            <person name="Plamann M."/>
            <person name="Seiler S."/>
            <person name="Dunlap J.C."/>
            <person name="Radford A."/>
            <person name="Aramayo R."/>
            <person name="Natvig D.O."/>
            <person name="Alex L.A."/>
            <person name="Mannhaupt G."/>
            <person name="Ebbole D.J."/>
            <person name="Freitag M."/>
            <person name="Paulsen I."/>
            <person name="Sachs M.S."/>
            <person name="Lander E.S."/>
            <person name="Nusbaum C."/>
            <person name="Birren B.W."/>
        </authorList>
    </citation>
    <scope>NUCLEOTIDE SEQUENCE [LARGE SCALE GENOMIC DNA]</scope>
    <source>
        <strain>ATCC 24698 / 74-OR23-1A / CBS 708.71 / DSM 1257 / FGSC 987</strain>
    </source>
</reference>
<name>YB960_NEUCR</name>
<organism>
    <name type="scientific">Neurospora crassa (strain ATCC 24698 / 74-OR23-1A / CBS 708.71 / DSM 1257 / FGSC 987)</name>
    <dbReference type="NCBI Taxonomy" id="367110"/>
    <lineage>
        <taxon>Eukaryota</taxon>
        <taxon>Fungi</taxon>
        <taxon>Dikarya</taxon>
        <taxon>Ascomycota</taxon>
        <taxon>Pezizomycotina</taxon>
        <taxon>Sordariomycetes</taxon>
        <taxon>Sordariomycetidae</taxon>
        <taxon>Sordariales</taxon>
        <taxon>Sordariaceae</taxon>
        <taxon>Neurospora</taxon>
    </lineage>
</organism>
<accession>Q96U48</accession>
<accession>Q7RU61</accession>
<protein>
    <recommendedName>
        <fullName>Uncharacterized protein B2A19.060</fullName>
    </recommendedName>
</protein>
<gene>
    <name type="ORF">B2A19.060</name>
    <name type="ORF">NCU21521</name>
</gene>
<feature type="chain" id="PRO_0000312984" description="Uncharacterized protein B2A19.060">
    <location>
        <begin position="1"/>
        <end position="101"/>
    </location>
</feature>
<keyword id="KW-1185">Reference proteome</keyword>